<dbReference type="EC" id="3.1.7.10"/>
<dbReference type="EMBL" id="JN001323">
    <property type="protein sequence ID" value="AEK75338.1"/>
    <property type="molecule type" value="mRNA"/>
</dbReference>
<dbReference type="EMBL" id="GL377628">
    <property type="protein sequence ID" value="EFJ14208.1"/>
    <property type="status" value="ALT_SEQ"/>
    <property type="molecule type" value="Genomic_DNA"/>
</dbReference>
<dbReference type="RefSeq" id="XP_002984563.1">
    <property type="nucleotide sequence ID" value="XM_002984517.1"/>
</dbReference>
<dbReference type="SMR" id="G1DGI7"/>
<dbReference type="STRING" id="88036.G1DGI7"/>
<dbReference type="KEGG" id="smo:SELMODRAFT_120716"/>
<dbReference type="eggNOG" id="ENOG502QQN6">
    <property type="taxonomic scope" value="Eukaryota"/>
</dbReference>
<dbReference type="HOGENOM" id="CLU_003125_2_0_1"/>
<dbReference type="InParanoid" id="G1DGI7"/>
<dbReference type="BRENDA" id="3.1.7.10">
    <property type="organism ID" value="9844"/>
</dbReference>
<dbReference type="UniPathway" id="UPA00213"/>
<dbReference type="Proteomes" id="UP000001514">
    <property type="component" value="Unassembled WGS sequence"/>
</dbReference>
<dbReference type="GO" id="GO:0102305">
    <property type="term" value="F:(13E)-labda-7,13-dien-15-ol synthase activity"/>
    <property type="evidence" value="ECO:0007669"/>
    <property type="project" value="UniProtKB-EC"/>
</dbReference>
<dbReference type="GO" id="GO:0000287">
    <property type="term" value="F:magnesium ion binding"/>
    <property type="evidence" value="ECO:0000318"/>
    <property type="project" value="GO_Central"/>
</dbReference>
<dbReference type="GO" id="GO:0010333">
    <property type="term" value="F:terpene synthase activity"/>
    <property type="evidence" value="ECO:0000318"/>
    <property type="project" value="GO_Central"/>
</dbReference>
<dbReference type="GO" id="GO:0016102">
    <property type="term" value="P:diterpenoid biosynthetic process"/>
    <property type="evidence" value="ECO:0000318"/>
    <property type="project" value="GO_Central"/>
</dbReference>
<dbReference type="CDD" id="cd00684">
    <property type="entry name" value="Terpene_cyclase_plant_C1"/>
    <property type="match status" value="1"/>
</dbReference>
<dbReference type="FunFam" id="1.50.10.130:FF:000002">
    <property type="entry name" value="Ent-copalyl diphosphate synthase, chloroplastic"/>
    <property type="match status" value="1"/>
</dbReference>
<dbReference type="FunFam" id="1.10.600.10:FF:000005">
    <property type="entry name" value="Ent-kaur-16-ene synthase, chloroplastic"/>
    <property type="match status" value="1"/>
</dbReference>
<dbReference type="Gene3D" id="1.50.10.160">
    <property type="match status" value="1"/>
</dbReference>
<dbReference type="Gene3D" id="1.10.600.10">
    <property type="entry name" value="Farnesyl Diphosphate Synthase"/>
    <property type="match status" value="1"/>
</dbReference>
<dbReference type="Gene3D" id="1.50.10.130">
    <property type="entry name" value="Terpene synthase, N-terminal domain"/>
    <property type="match status" value="1"/>
</dbReference>
<dbReference type="InterPro" id="IPR008949">
    <property type="entry name" value="Isoprenoid_synthase_dom_sf"/>
</dbReference>
<dbReference type="InterPro" id="IPR034741">
    <property type="entry name" value="Terpene_cyclase-like_1_C"/>
</dbReference>
<dbReference type="InterPro" id="IPR044814">
    <property type="entry name" value="Terpene_cyclase_plant_C1"/>
</dbReference>
<dbReference type="InterPro" id="IPR001906">
    <property type="entry name" value="Terpene_synth_N"/>
</dbReference>
<dbReference type="InterPro" id="IPR036965">
    <property type="entry name" value="Terpene_synth_N_sf"/>
</dbReference>
<dbReference type="InterPro" id="IPR050148">
    <property type="entry name" value="Terpene_synthase-like"/>
</dbReference>
<dbReference type="InterPro" id="IPR005630">
    <property type="entry name" value="Terpene_synthase_metal-bd"/>
</dbReference>
<dbReference type="InterPro" id="IPR008930">
    <property type="entry name" value="Terpenoid_cyclase/PrenylTrfase"/>
</dbReference>
<dbReference type="PANTHER" id="PTHR31739">
    <property type="entry name" value="ENT-COPALYL DIPHOSPHATE SYNTHASE, CHLOROPLASTIC"/>
    <property type="match status" value="1"/>
</dbReference>
<dbReference type="PANTHER" id="PTHR31739:SF4">
    <property type="entry name" value="ENT-COPALYL DIPHOSPHATE SYNTHASE, CHLOROPLASTIC"/>
    <property type="match status" value="1"/>
</dbReference>
<dbReference type="Pfam" id="PF01397">
    <property type="entry name" value="Terpene_synth"/>
    <property type="match status" value="1"/>
</dbReference>
<dbReference type="Pfam" id="PF03936">
    <property type="entry name" value="Terpene_synth_C"/>
    <property type="match status" value="1"/>
</dbReference>
<dbReference type="SFLD" id="SFLDS00005">
    <property type="entry name" value="Isoprenoid_Synthase_Type_I"/>
    <property type="match status" value="1"/>
</dbReference>
<dbReference type="SFLD" id="SFLDG01019">
    <property type="entry name" value="Terpene_Cyclase_Like_1_C_Termi"/>
    <property type="match status" value="1"/>
</dbReference>
<dbReference type="SFLD" id="SFLDG01014">
    <property type="entry name" value="Terpene_Cyclase_Like_1_N-term"/>
    <property type="match status" value="1"/>
</dbReference>
<dbReference type="SFLD" id="SFLDG01605">
    <property type="entry name" value="Terpene_Cyclase_Like_1_N-term"/>
    <property type="match status" value="1"/>
</dbReference>
<dbReference type="SUPFAM" id="SSF48239">
    <property type="entry name" value="Terpenoid cyclases/Protein prenyltransferases"/>
    <property type="match status" value="2"/>
</dbReference>
<dbReference type="SUPFAM" id="SSF48576">
    <property type="entry name" value="Terpenoid synthases"/>
    <property type="match status" value="1"/>
</dbReference>
<gene>
    <name type="ORF">SELMODRAFT_120716</name>
</gene>
<keyword id="KW-0378">Hydrolase</keyword>
<keyword id="KW-0460">Magnesium</keyword>
<keyword id="KW-0479">Metal-binding</keyword>
<keyword id="KW-1185">Reference proteome</keyword>
<feature type="chain" id="PRO_0000418754" description="(13E)-labda-7,13-dien-15-ol synthase">
    <location>
        <begin position="1"/>
        <end position="750"/>
    </location>
</feature>
<feature type="short sequence motif" description="DXDD motif">
    <location>
        <begin position="284"/>
        <end position="287"/>
    </location>
</feature>
<feature type="short sequence motif" description="DDXXD motif">
    <location>
        <begin position="501"/>
        <end position="505"/>
    </location>
</feature>
<feature type="binding site" evidence="2">
    <location>
        <position position="284"/>
    </location>
    <ligand>
        <name>Mg(2+)</name>
        <dbReference type="ChEBI" id="CHEBI:18420"/>
        <label>4</label>
    </ligand>
</feature>
<feature type="binding site" evidence="2">
    <location>
        <position position="286"/>
    </location>
    <ligand>
        <name>Mg(2+)</name>
        <dbReference type="ChEBI" id="CHEBI:18420"/>
        <label>4</label>
    </ligand>
</feature>
<feature type="binding site" evidence="1">
    <location>
        <position position="501"/>
    </location>
    <ligand>
        <name>Mg(2+)</name>
        <dbReference type="ChEBI" id="CHEBI:18420"/>
        <label>1</label>
    </ligand>
</feature>
<feature type="binding site" evidence="1">
    <location>
        <position position="501"/>
    </location>
    <ligand>
        <name>Mg(2+)</name>
        <dbReference type="ChEBI" id="CHEBI:18420"/>
        <label>2</label>
    </ligand>
</feature>
<feature type="binding site" evidence="1">
    <location>
        <position position="505"/>
    </location>
    <ligand>
        <name>Mg(2+)</name>
        <dbReference type="ChEBI" id="CHEBI:18420"/>
        <label>1</label>
    </ligand>
</feature>
<feature type="binding site" evidence="1">
    <location>
        <position position="505"/>
    </location>
    <ligand>
        <name>Mg(2+)</name>
        <dbReference type="ChEBI" id="CHEBI:18420"/>
        <label>2</label>
    </ligand>
</feature>
<feature type="binding site" evidence="1">
    <location>
        <position position="647"/>
    </location>
    <ligand>
        <name>Mg(2+)</name>
        <dbReference type="ChEBI" id="CHEBI:18420"/>
        <label>3</label>
    </ligand>
</feature>
<feature type="binding site" evidence="1">
    <location>
        <position position="651"/>
    </location>
    <ligand>
        <name>Mg(2+)</name>
        <dbReference type="ChEBI" id="CHEBI:18420"/>
        <label>3</label>
    </ligand>
</feature>
<feature type="binding site" evidence="1">
    <location>
        <position position="655"/>
    </location>
    <ligand>
        <name>Mg(2+)</name>
        <dbReference type="ChEBI" id="CHEBI:18420"/>
        <label>3</label>
    </ligand>
</feature>
<feature type="sequence conflict" description="In Ref. 1; AEK75338." evidence="4" ref="1">
    <original>P</original>
    <variation>A</variation>
    <location>
        <position position="748"/>
    </location>
</feature>
<accession>G1DGI7</accession>
<accession>D8SMM0</accession>
<comment type="function">
    <text evidence="3">Bifunctional diterpene synthase that directly generates the endocyclic double bond, as well as the hydroxyl group: produces an endocyclic double bond isomer of copalyl diphosphate (CPP), and carries out subsequent replacement of the diphosphate by a hydroxyl group to form (13E)-labda-7,13-dien-15-ol.</text>
</comment>
<comment type="catalytic activity">
    <reaction evidence="3">
        <text>geranylgeranyl diphosphate + H2O = (13E)-labda-7,13-dien-15-ol + diphosphate</text>
        <dbReference type="Rhea" id="RHEA:32075"/>
        <dbReference type="ChEBI" id="CHEBI:15377"/>
        <dbReference type="ChEBI" id="CHEBI:33019"/>
        <dbReference type="ChEBI" id="CHEBI:57533"/>
        <dbReference type="ChEBI" id="CHEBI:63683"/>
        <dbReference type="EC" id="3.1.7.10"/>
    </reaction>
</comment>
<comment type="cofactor">
    <cofactor evidence="1">
        <name>Mg(2+)</name>
        <dbReference type="ChEBI" id="CHEBI:18420"/>
    </cofactor>
    <text evidence="1">Binds 3 Mg(2+) ions per subunit.</text>
</comment>
<comment type="pathway">
    <text>Secondary metabolite biosynthesis; terpenoid biosynthesis.</text>
</comment>
<comment type="domain">
    <text evidence="1">The Asp-Xaa-Asp-Asp (DXDD) and Asp-Asp-Xaa-Xaa-Asp/Glu (DDXXD/E) motifs are important for the catalytic activities, presumably through binding to Mg(2+).</text>
</comment>
<comment type="miscellaneous">
    <text>Selaginella moellendorffii contains two distinct types of functional terpene synthases (TPS) genes, the typical seed plants TPS genes (SmTPSs) and a microbial type TPS genes (SmMTPSLs).</text>
</comment>
<comment type="similarity">
    <text evidence="4">Belongs to the terpene synthase family.</text>
</comment>
<comment type="sequence caution" evidence="4">
    <conflict type="erroneous gene model prediction">
        <sequence resource="EMBL-CDS" id="EFJ14208"/>
    </conflict>
</comment>
<name>TPS7_SELML</name>
<evidence type="ECO:0000250" key="1"/>
<evidence type="ECO:0000250" key="2">
    <source>
        <dbReference type="UniProtKB" id="C7BKP9"/>
    </source>
</evidence>
<evidence type="ECO:0000269" key="3">
    <source>
    </source>
</evidence>
<evidence type="ECO:0000305" key="4"/>
<proteinExistence type="evidence at protein level"/>
<sequence>MIEEMRKLLATLDDGEISPSAYDTAWVARIPSQSNATCPEFPETLEWIAHNQLPDGSWGDRNHFQIYDRVLSTVSCLVALKTWNLGHDNINKGERFLKQNIYKLTKDKGDLLCGFELIFMTMLEEAKQKGLDIPIDIPALKILQGYRQKKLQKIPLEMVHSIPTTILYSLEGLQDHINWEKILQFIGTDGSFLSSPSATACVYMHTKDPRCLEYLKGVVKKVKNSVPCQYAIDLFERLWIVDTLERLGIDRYFQPEIKNILDYVYKYWSDKKGIGWGRESYLKDIDDTSMGFRLLRLHGYKVTPDVFLNFMSSEDKFFCFPGESYHGASDIFNLYRASQVAFANDNILTKAKNYAHKYLSQLDKAYLDKWSAKKNFFQEVEFELSNQWNSCLPRAYSKSYIHNYGPNDIWIAKTIYRLPFVNNELFINLAKEDFNACQSIHQSEIQTLLRWWAALKFGDLPFFGDKVVTAHFSIASCMFEPEFSELRLFYTKYALLSSTLDDLADYYGSPAQTRCILEAIRSWDPSLVSHLSEEVQICFSGLYRTINEMVKSASKVQTGSSINIREHMQEQLAKLISAQLVDAEWMERKHIPSFETYLSNATVSVGMQDLLLSSIFFCGESISKHLMQEIKNSRCLQLTCLIARLCNDIGTYQFEREKGEVASSITCYMRENRGITESQAIEHLQGIIDESWKELTEEFLTPSQIPRSIKRLMFETARIFQFIYPKKDNFKDPSKAMASLIQNVLYKPAE</sequence>
<organism>
    <name type="scientific">Selaginella moellendorffii</name>
    <name type="common">Spikemoss</name>
    <dbReference type="NCBI Taxonomy" id="88036"/>
    <lineage>
        <taxon>Eukaryota</taxon>
        <taxon>Viridiplantae</taxon>
        <taxon>Streptophyta</taxon>
        <taxon>Embryophyta</taxon>
        <taxon>Tracheophyta</taxon>
        <taxon>Lycopodiopsida</taxon>
        <taxon>Selaginellales</taxon>
        <taxon>Selaginellaceae</taxon>
        <taxon>Selaginella</taxon>
    </lineage>
</organism>
<reference key="1">
    <citation type="journal article" date="2011" name="ChemBioChem">
        <title>A novel labda-7,13e-dien-15-ol-producing bifunctional diterpene synthase from Selaginella moellendorffii.</title>
        <authorList>
            <person name="Mafu S."/>
            <person name="Hillwig M.L."/>
            <person name="Peters R.J."/>
        </authorList>
    </citation>
    <scope>NUCLEOTIDE SEQUENCE [MRNA]</scope>
    <scope>FUNCTION</scope>
    <scope>CATALYTIC ACTIVITY</scope>
</reference>
<reference key="2">
    <citation type="journal article" date="2011" name="Science">
        <title>The Selaginella genome identifies genetic changes associated with the evolution of vascular plants.</title>
        <authorList>
            <person name="Banks J.A."/>
            <person name="Nishiyama T."/>
            <person name="Hasebe M."/>
            <person name="Bowman J.L."/>
            <person name="Gribskov M."/>
            <person name="dePamphilis C."/>
            <person name="Albert V.A."/>
            <person name="Aono N."/>
            <person name="Aoyama T."/>
            <person name="Ambrose B.A."/>
            <person name="Ashton N.W."/>
            <person name="Axtell M.J."/>
            <person name="Barker E."/>
            <person name="Barker M.S."/>
            <person name="Bennetzen J.L."/>
            <person name="Bonawitz N.D."/>
            <person name="Chapple C."/>
            <person name="Cheng C."/>
            <person name="Correa L.G."/>
            <person name="Dacre M."/>
            <person name="DeBarry J."/>
            <person name="Dreyer I."/>
            <person name="Elias M."/>
            <person name="Engstrom E.M."/>
            <person name="Estelle M."/>
            <person name="Feng L."/>
            <person name="Finet C."/>
            <person name="Floyd S.K."/>
            <person name="Frommer W.B."/>
            <person name="Fujita T."/>
            <person name="Gramzow L."/>
            <person name="Gutensohn M."/>
            <person name="Harholt J."/>
            <person name="Hattori M."/>
            <person name="Heyl A."/>
            <person name="Hirai T."/>
            <person name="Hiwatashi Y."/>
            <person name="Ishikawa M."/>
            <person name="Iwata M."/>
            <person name="Karol K.G."/>
            <person name="Koehler B."/>
            <person name="Kolukisaoglu U."/>
            <person name="Kubo M."/>
            <person name="Kurata T."/>
            <person name="Lalonde S."/>
            <person name="Li K."/>
            <person name="Li Y."/>
            <person name="Litt A."/>
            <person name="Lyons E."/>
            <person name="Manning G."/>
            <person name="Maruyama T."/>
            <person name="Michael T.P."/>
            <person name="Mikami K."/>
            <person name="Miyazaki S."/>
            <person name="Morinaga S."/>
            <person name="Murata T."/>
            <person name="Mueller-Roeber B."/>
            <person name="Nelson D.R."/>
            <person name="Obara M."/>
            <person name="Oguri Y."/>
            <person name="Olmstead R.G."/>
            <person name="Onodera N."/>
            <person name="Petersen B.L."/>
            <person name="Pils B."/>
            <person name="Prigge M."/>
            <person name="Rensing S.A."/>
            <person name="Riano-Pachon D.M."/>
            <person name="Roberts A.W."/>
            <person name="Sato Y."/>
            <person name="Scheller H.V."/>
            <person name="Schulz B."/>
            <person name="Schulz C."/>
            <person name="Shakirov E.V."/>
            <person name="Shibagaki N."/>
            <person name="Shinohara N."/>
            <person name="Shippen D.E."/>
            <person name="Soerensen I."/>
            <person name="Sotooka R."/>
            <person name="Sugimoto N."/>
            <person name="Sugita M."/>
            <person name="Sumikawa N."/>
            <person name="Tanurdzic M."/>
            <person name="Theissen G."/>
            <person name="Ulvskov P."/>
            <person name="Wakazuki S."/>
            <person name="Weng J.K."/>
            <person name="Willats W.W."/>
            <person name="Wipf D."/>
            <person name="Wolf P.G."/>
            <person name="Yang L."/>
            <person name="Zimmer A.D."/>
            <person name="Zhu Q."/>
            <person name="Mitros T."/>
            <person name="Hellsten U."/>
            <person name="Loque D."/>
            <person name="Otillar R."/>
            <person name="Salamov A."/>
            <person name="Schmutz J."/>
            <person name="Shapiro H."/>
            <person name="Lindquist E."/>
            <person name="Lucas S."/>
            <person name="Rokhsar D."/>
            <person name="Grigoriev I.V."/>
        </authorList>
    </citation>
    <scope>NUCLEOTIDE SEQUENCE [LARGE SCALE GENOMIC DNA]</scope>
</reference>
<reference key="3">
    <citation type="journal article" date="2012" name="Proc. Natl. Acad. Sci. U.S.A.">
        <title>Nonseed plant Selaginella moellendorfii has both seed plant and microbial types of terpene synthases.</title>
        <authorList>
            <person name="Li G."/>
            <person name="Kollner T.G."/>
            <person name="Yin Y."/>
            <person name="Jiang Y."/>
            <person name="Chen H."/>
            <person name="Xu Y."/>
            <person name="Gershenzon J."/>
            <person name="Pichersky E."/>
            <person name="Chen F."/>
        </authorList>
    </citation>
    <scope>GENE FAMILY</scope>
    <scope>NOMENCLATURE</scope>
</reference>
<protein>
    <recommendedName>
        <fullName>(13E)-labda-7,13-dien-15-ol synthase</fullName>
        <shortName>SmCPSKSL1</shortName>
        <ecNumber>3.1.7.10</ecNumber>
    </recommendedName>
    <alternativeName>
        <fullName>Labda-7,13E-dien-15-ol-producing bifunctional diterpene synthase</fullName>
    </alternativeName>
    <alternativeName>
        <fullName>Terpene synthase 7</fullName>
        <shortName>SmTPS7</shortName>
    </alternativeName>
</protein>